<protein>
    <recommendedName>
        <fullName>HTH-type transcriptional regulator SarT</fullName>
    </recommendedName>
    <alternativeName>
        <fullName>Staphylococcal accessory regulator T</fullName>
    </alternativeName>
</protein>
<proteinExistence type="evidence at protein level"/>
<feature type="chain" id="PRO_0000249330" description="HTH-type transcriptional regulator SarT">
    <location>
        <begin position="1"/>
        <end position="118"/>
    </location>
</feature>
<feature type="DNA-binding region" description="H-T-H motif" evidence="1">
    <location>
        <begin position="55"/>
        <end position="78"/>
    </location>
</feature>
<accession>Q2G2B1</accession>
<evidence type="ECO:0000255" key="1"/>
<evidence type="ECO:0000269" key="2">
    <source>
    </source>
</evidence>
<evidence type="ECO:0000305" key="3"/>
<comment type="function">
    <text>Transcriptional regulator acting as an intermediary between major regulators sarA and agr and virulence genes. Represses alpha-hemolysin (hla) gene expression. Down-regulates agr RNAIII expression by repressing sarU, a positive activator of agr expression. Up-regulates sarS, which induces the expression of the cell wall-associated protein A (spa).</text>
</comment>
<comment type="subcellular location">
    <subcellularLocation>
        <location evidence="3">Cytoplasm</location>
    </subcellularLocation>
</comment>
<comment type="induction">
    <text evidence="2">Repressed by SarA and agr, particularly in the post-exponential phase.</text>
</comment>
<comment type="similarity">
    <text evidence="3">Belongs to the SarA family.</text>
</comment>
<comment type="sequence caution" evidence="3">
    <conflict type="erroneous initiation">
        <sequence resource="EMBL-CDS" id="ABD31802"/>
    </conflict>
</comment>
<reference key="1">
    <citation type="book" date="2006" name="Gram positive pathogens, 2nd edition">
        <title>The Staphylococcus aureus NCTC 8325 genome.</title>
        <editorList>
            <person name="Fischetti V."/>
            <person name="Novick R."/>
            <person name="Ferretti J."/>
            <person name="Portnoy D."/>
            <person name="Rood J."/>
        </editorList>
        <authorList>
            <person name="Gillaspy A.F."/>
            <person name="Worrell V."/>
            <person name="Orvis J."/>
            <person name="Roe B.A."/>
            <person name="Dyer D.W."/>
            <person name="Iandolo J.J."/>
        </authorList>
    </citation>
    <scope>NUCLEOTIDE SEQUENCE [LARGE SCALE GENOMIC DNA]</scope>
    <source>
        <strain>NCTC 8325 / PS 47</strain>
    </source>
</reference>
<reference key="2">
    <citation type="journal article" date="2001" name="Infect. Immun.">
        <title>SarT, a repressor of alpha-hemolysin in Staphylococcus aureus.</title>
        <authorList>
            <person name="Schmidt K.A."/>
            <person name="Manna A.C."/>
            <person name="Gill S.R."/>
            <person name="Cheung A.L."/>
        </authorList>
    </citation>
    <scope>PROTEIN SEQUENCE OF 1-9</scope>
    <scope>REPRESSION BY SARA AND AGR</scope>
    <scope>REGULATION OF HLA</scope>
</reference>
<reference key="3">
    <citation type="journal article" date="2003" name="Infect. Immun.">
        <title>sarU, a sarA homolog, is repressed by SarT and regulates virulence genes in Staphylococcus aureus.</title>
        <authorList>
            <person name="Manna A.C."/>
            <person name="Cheung A.L."/>
        </authorList>
    </citation>
    <scope>REGULATION OF SARU AND AGR</scope>
</reference>
<reference key="4">
    <citation type="journal article" date="2003" name="Infect. Immun.">
        <title>SarT influences sarS expression in Staphylococcus aureus.</title>
        <authorList>
            <person name="Schmidt K.A."/>
            <person name="Manna A.C."/>
            <person name="Cheung A.L."/>
        </authorList>
    </citation>
    <scope>REGULATION OF SARS AND SPA</scope>
</reference>
<gene>
    <name type="primary">sarT</name>
    <name type="ordered locus">SAOUHSC_02799</name>
</gene>
<organism>
    <name type="scientific">Staphylococcus aureus (strain NCTC 8325 / PS 47)</name>
    <dbReference type="NCBI Taxonomy" id="93061"/>
    <lineage>
        <taxon>Bacteria</taxon>
        <taxon>Bacillati</taxon>
        <taxon>Bacillota</taxon>
        <taxon>Bacilli</taxon>
        <taxon>Bacillales</taxon>
        <taxon>Staphylococcaceae</taxon>
        <taxon>Staphylococcus</taxon>
    </lineage>
</organism>
<dbReference type="EMBL" id="CP000253">
    <property type="protein sequence ID" value="ABD31802.1"/>
    <property type="status" value="ALT_INIT"/>
    <property type="molecule type" value="Genomic_DNA"/>
</dbReference>
<dbReference type="RefSeq" id="WP_000998869.1">
    <property type="nucleotide sequence ID" value="NZ_LS483365.1"/>
</dbReference>
<dbReference type="RefSeq" id="WP_001822204.1">
    <property type="nucleotide sequence ID" value="NC_007795.1"/>
</dbReference>
<dbReference type="RefSeq" id="YP_501258.1">
    <property type="nucleotide sequence ID" value="NC_007795.1"/>
</dbReference>
<dbReference type="SMR" id="Q2G2B1"/>
<dbReference type="STRING" id="93061.SAOUHSC_02799"/>
<dbReference type="PaxDb" id="1280-SAXN108_2745"/>
<dbReference type="GeneID" id="3921453"/>
<dbReference type="KEGG" id="sao:SAOUHSC_02799"/>
<dbReference type="PATRIC" id="fig|93061.5.peg.2531"/>
<dbReference type="eggNOG" id="COG1846">
    <property type="taxonomic scope" value="Bacteria"/>
</dbReference>
<dbReference type="HOGENOM" id="CLU_2095348_0_0_9"/>
<dbReference type="OrthoDB" id="2376601at2"/>
<dbReference type="Proteomes" id="UP000008816">
    <property type="component" value="Chromosome"/>
</dbReference>
<dbReference type="GO" id="GO:0005737">
    <property type="term" value="C:cytoplasm"/>
    <property type="evidence" value="ECO:0007669"/>
    <property type="project" value="UniProtKB-SubCell"/>
</dbReference>
<dbReference type="GO" id="GO:0003677">
    <property type="term" value="F:DNA binding"/>
    <property type="evidence" value="ECO:0007669"/>
    <property type="project" value="UniProtKB-KW"/>
</dbReference>
<dbReference type="GO" id="GO:0003700">
    <property type="term" value="F:DNA-binding transcription factor activity"/>
    <property type="evidence" value="ECO:0007669"/>
    <property type="project" value="InterPro"/>
</dbReference>
<dbReference type="GO" id="GO:0006355">
    <property type="term" value="P:regulation of DNA-templated transcription"/>
    <property type="evidence" value="ECO:0000318"/>
    <property type="project" value="GO_Central"/>
</dbReference>
<dbReference type="GO" id="GO:0006950">
    <property type="term" value="P:response to stress"/>
    <property type="evidence" value="ECO:0000318"/>
    <property type="project" value="GO_Central"/>
</dbReference>
<dbReference type="Gene3D" id="1.10.10.10">
    <property type="entry name" value="Winged helix-like DNA-binding domain superfamily/Winged helix DNA-binding domain"/>
    <property type="match status" value="1"/>
</dbReference>
<dbReference type="InterPro" id="IPR039422">
    <property type="entry name" value="MarR/SlyA-like"/>
</dbReference>
<dbReference type="InterPro" id="IPR010166">
    <property type="entry name" value="SarA/Rot_dom"/>
</dbReference>
<dbReference type="InterPro" id="IPR055166">
    <property type="entry name" value="Transc_reg_Sar_Rot_HTH"/>
</dbReference>
<dbReference type="InterPro" id="IPR036388">
    <property type="entry name" value="WH-like_DNA-bd_sf"/>
</dbReference>
<dbReference type="InterPro" id="IPR036390">
    <property type="entry name" value="WH_DNA-bd_sf"/>
</dbReference>
<dbReference type="NCBIfam" id="TIGR01889">
    <property type="entry name" value="Staph_reg_Sar"/>
    <property type="match status" value="1"/>
</dbReference>
<dbReference type="PANTHER" id="PTHR33164:SF5">
    <property type="entry name" value="ORGANIC HYDROPEROXIDE RESISTANCE TRANSCRIPTIONAL REGULATOR"/>
    <property type="match status" value="1"/>
</dbReference>
<dbReference type="PANTHER" id="PTHR33164">
    <property type="entry name" value="TRANSCRIPTIONAL REGULATOR, MARR FAMILY"/>
    <property type="match status" value="1"/>
</dbReference>
<dbReference type="Pfam" id="PF22381">
    <property type="entry name" value="Staph_reg_Sar_Rot"/>
    <property type="match status" value="1"/>
</dbReference>
<dbReference type="SUPFAM" id="SSF46785">
    <property type="entry name" value="Winged helix' DNA-binding domain"/>
    <property type="match status" value="1"/>
</dbReference>
<name>SART_STAA8</name>
<sequence>MNDLKSKSNIKLMKRVLTTYELRKYLKKYFCLTLDNYLVLAYLDVFKNDEGKYFMRDIISYIGIDQSRIVKSVKDLSKKGYLNKCRDPHDSRNVIIVVSVKQHNYIKNLLSEININET</sequence>
<keyword id="KW-0010">Activator</keyword>
<keyword id="KW-0963">Cytoplasm</keyword>
<keyword id="KW-0903">Direct protein sequencing</keyword>
<keyword id="KW-0238">DNA-binding</keyword>
<keyword id="KW-1185">Reference proteome</keyword>
<keyword id="KW-0678">Repressor</keyword>
<keyword id="KW-0804">Transcription</keyword>
<keyword id="KW-0805">Transcription regulation</keyword>
<keyword id="KW-0843">Virulence</keyword>